<organism>
    <name type="scientific">Haloarcula marismortui (strain ATCC 43049 / DSM 3752 / JCM 8966 / VKM B-1809)</name>
    <name type="common">Halobacterium marismortui</name>
    <dbReference type="NCBI Taxonomy" id="272569"/>
    <lineage>
        <taxon>Archaea</taxon>
        <taxon>Methanobacteriati</taxon>
        <taxon>Methanobacteriota</taxon>
        <taxon>Stenosarchaea group</taxon>
        <taxon>Halobacteria</taxon>
        <taxon>Halobacteriales</taxon>
        <taxon>Haloarculaceae</taxon>
        <taxon>Haloarcula</taxon>
    </lineage>
</organism>
<protein>
    <recommendedName>
        <fullName evidence="1">HGPRTase-like protein 1</fullName>
        <ecNumber evidence="1">2.4.2.-</ecNumber>
    </recommendedName>
</protein>
<gene>
    <name type="ordered locus">rrnAC1903</name>
</gene>
<comment type="function">
    <text evidence="1">May catalyze a purine salvage reaction, the substrate is unknown.</text>
</comment>
<comment type="similarity">
    <text evidence="1">Belongs to the purine/pyrimidine phosphoribosyltransferase family. Archaeal HPRT subfamily.</text>
</comment>
<keyword id="KW-0660">Purine salvage</keyword>
<keyword id="KW-1185">Reference proteome</keyword>
<keyword id="KW-0808">Transferase</keyword>
<feature type="chain" id="PRO_0000415450" description="HGPRTase-like protein 1">
    <location>
        <begin position="1"/>
        <end position="182"/>
    </location>
</feature>
<sequence length="182" mass="19763">MEKLRESLHEAPIIDKDGYSYLVHPLSNGVPMLEPELLREVVVGVTRAADLDVDKIVAPEAMGIHIATALSLQTDIPLVVIRKRSYGLDDEVPLHKTTGYSESEMFINDIEAGDDLLIVDDLLSTGGTMAAICEALDDIGADISDIVVVFRKQGESALDDTDYDVTSLLDISVDQDGVTIHD</sequence>
<accession>Q5V125</accession>
<name>HPRL1_HALMA</name>
<evidence type="ECO:0000255" key="1">
    <source>
        <dbReference type="HAMAP-Rule" id="MF_01467"/>
    </source>
</evidence>
<dbReference type="EC" id="2.4.2.-" evidence="1"/>
<dbReference type="EMBL" id="AY596297">
    <property type="protein sequence ID" value="AAV46778.1"/>
    <property type="molecule type" value="Genomic_DNA"/>
</dbReference>
<dbReference type="SMR" id="Q5V125"/>
<dbReference type="STRING" id="272569.rrnAC1903"/>
<dbReference type="PaxDb" id="272569-rrnAC1903"/>
<dbReference type="DNASU" id="3127774"/>
<dbReference type="EnsemblBacteria" id="AAV46778">
    <property type="protein sequence ID" value="AAV46778"/>
    <property type="gene ID" value="rrnAC1903"/>
</dbReference>
<dbReference type="KEGG" id="hma:rrnAC1903"/>
<dbReference type="PATRIC" id="fig|272569.17.peg.2562"/>
<dbReference type="eggNOG" id="arCOG00030">
    <property type="taxonomic scope" value="Archaea"/>
</dbReference>
<dbReference type="HOGENOM" id="CLU_126376_0_0_2"/>
<dbReference type="Proteomes" id="UP000001169">
    <property type="component" value="Chromosome I"/>
</dbReference>
<dbReference type="GO" id="GO:0016740">
    <property type="term" value="F:transferase activity"/>
    <property type="evidence" value="ECO:0007669"/>
    <property type="project" value="UniProtKB-KW"/>
</dbReference>
<dbReference type="GO" id="GO:0006166">
    <property type="term" value="P:purine ribonucleoside salvage"/>
    <property type="evidence" value="ECO:0007669"/>
    <property type="project" value="UniProtKB-KW"/>
</dbReference>
<dbReference type="CDD" id="cd06223">
    <property type="entry name" value="PRTases_typeI"/>
    <property type="match status" value="1"/>
</dbReference>
<dbReference type="Gene3D" id="3.40.50.2020">
    <property type="match status" value="1"/>
</dbReference>
<dbReference type="HAMAP" id="MF_01467">
    <property type="entry name" value="Hypx_phosphoribosyltr"/>
    <property type="match status" value="1"/>
</dbReference>
<dbReference type="InterPro" id="IPR026597">
    <property type="entry name" value="HGPRTase-like"/>
</dbReference>
<dbReference type="InterPro" id="IPR000836">
    <property type="entry name" value="PRibTrfase_dom"/>
</dbReference>
<dbReference type="InterPro" id="IPR029057">
    <property type="entry name" value="PRTase-like"/>
</dbReference>
<dbReference type="InterPro" id="IPR050118">
    <property type="entry name" value="Pur/Pyrimidine_PRTase"/>
</dbReference>
<dbReference type="NCBIfam" id="NF040646">
    <property type="entry name" value="HPT_Archaea"/>
    <property type="match status" value="1"/>
</dbReference>
<dbReference type="NCBIfam" id="NF002635">
    <property type="entry name" value="PRK02304.1-4"/>
    <property type="match status" value="1"/>
</dbReference>
<dbReference type="PANTHER" id="PTHR43864">
    <property type="entry name" value="HYPOXANTHINE/GUANINE PHOSPHORIBOSYLTRANSFERASE"/>
    <property type="match status" value="1"/>
</dbReference>
<dbReference type="PANTHER" id="PTHR43864:SF1">
    <property type="entry name" value="XANTHINE PHOSPHORIBOSYLTRANSFERASE"/>
    <property type="match status" value="1"/>
</dbReference>
<dbReference type="Pfam" id="PF00156">
    <property type="entry name" value="Pribosyltran"/>
    <property type="match status" value="1"/>
</dbReference>
<dbReference type="SUPFAM" id="SSF53271">
    <property type="entry name" value="PRTase-like"/>
    <property type="match status" value="1"/>
</dbReference>
<dbReference type="PROSITE" id="PS00103">
    <property type="entry name" value="PUR_PYR_PR_TRANSFER"/>
    <property type="match status" value="1"/>
</dbReference>
<reference key="1">
    <citation type="journal article" date="2004" name="Genome Res.">
        <title>Genome sequence of Haloarcula marismortui: a halophilic archaeon from the Dead Sea.</title>
        <authorList>
            <person name="Baliga N.S."/>
            <person name="Bonneau R."/>
            <person name="Facciotti M.T."/>
            <person name="Pan M."/>
            <person name="Glusman G."/>
            <person name="Deutsch E.W."/>
            <person name="Shannon P."/>
            <person name="Chiu Y."/>
            <person name="Weng R.S."/>
            <person name="Gan R.R."/>
            <person name="Hung P."/>
            <person name="Date S.V."/>
            <person name="Marcotte E."/>
            <person name="Hood L."/>
            <person name="Ng W.V."/>
        </authorList>
    </citation>
    <scope>NUCLEOTIDE SEQUENCE [LARGE SCALE GENOMIC DNA]</scope>
    <source>
        <strain>ATCC 43049 / DSM 3752 / JCM 8966 / VKM B-1809</strain>
    </source>
</reference>
<proteinExistence type="inferred from homology"/>